<comment type="function">
    <text evidence="2 5 6 7">Proton-selective ion channel (PubMed:29371428, PubMed:36266567). Biphasically modulated by acid and alkali, mediating proton influx and efflux in response to extracellular acid and base stimulation, respectively. Sour taste receptor, which carries inward currents in response to extracellular acidification (By similarity). Sensor for ammonium chloride (NH(4)Cl) in taste receptor cells (PubMed:37798269). NH(4)Cl acts by increasing the intracellular pH, thereby generating a driving force for proton entry through OTOP1 channel (PubMed:37798269). Might also participate in alkaline sensation. Plays a role in the regulation of Ca(2+) flux in response to purigenic (ATP, ADP and UDP) stimuli, leading to increase in cytosolic Ca(2+) due to influx of extracellular calcium. May play this role by inhibiting P2Y purinoceptor-mediated Ca(2+) release in a Ca(2+)-dependent manner and promote an influx of Ca(2+) in response to ATP. Through this mechanism and possibly others, plays a role in the formation and function of calcium carbonate-based structures in the vestibular system of the inner ear, called otoconia, that sense gravity and linear acceleration. In obesity, may attenuate adipose tissue inflammation, through the negative regulation of IFNG signaling, hence may play an adaptive role in the maintainance of metabolic homeostasis. Following alkali activation, may also be permeable Na(+), K(+), Cs(+) and Li(+) (By similarity).</text>
</comment>
<comment type="catalytic activity">
    <reaction evidence="5 6">
        <text>H(+)(in) = H(+)(out)</text>
        <dbReference type="Rhea" id="RHEA:34979"/>
        <dbReference type="ChEBI" id="CHEBI:15378"/>
    </reaction>
</comment>
<comment type="activity regulation">
    <text evidence="2 7">Activated by both acid and alkali, with proton influx in response to extracellular acid and proton efflux during alkali stimulation (By similarity). Inhibited by Zn(2+); this inhibition is thought to be pH-sensitive (PubMed:37798269). Currents evoked in response to mild acid (pH 6.0) stimulus may also be mildly potentiated by exposure to Zn(2+) (By similarity). Activated by NH(4)Cl (By similarity).</text>
</comment>
<comment type="subunit">
    <text evidence="1 2">Homodimer (By similarity). Interacts with STAT1, independently of STAT1 phosphorylation status (By similarity).</text>
</comment>
<comment type="subcellular location">
    <subcellularLocation>
        <location evidence="6">Cell membrane</location>
        <topology evidence="1">Multi-pass membrane protein</topology>
    </subcellularLocation>
    <subcellularLocation>
        <location evidence="2">Cell projection</location>
        <location evidence="2">Microvillus</location>
    </subcellularLocation>
    <text evidence="2">Found in the gelatinous membrane overlying the inner ear macular epithelium. Also detected in the apical microvilli in inner ear supporting cells.</text>
</comment>
<comment type="domain">
    <text evidence="6">Residues involved in the gating by extracellular Zn (2+) and pH are located in the extracellular loops between transmembrane domain 5-6 and transmembrane domain 11-12.</text>
</comment>
<comment type="similarity">
    <text evidence="10">Belongs to the otopetrin family.</text>
</comment>
<comment type="online information" name="Protein Spotlight">
    <link uri="https://www.proteinspotlight.org/back_issues/089"/>
    <text>Ear of stone - Issue 89 of December 2007</text>
</comment>
<feature type="chain" id="PRO_0000313816" description="Proton channel OTOP1">
    <location>
        <begin position="1"/>
        <end position="612"/>
    </location>
</feature>
<feature type="topological domain" description="Cytoplasmic" evidence="10">
    <location>
        <begin position="1"/>
        <end position="58"/>
    </location>
</feature>
<feature type="transmembrane region" description="Helical; Name=1" evidence="1 3">
    <location>
        <begin position="59"/>
        <end position="80"/>
    </location>
</feature>
<feature type="topological domain" description="Extracellular" evidence="10">
    <location>
        <begin position="81"/>
        <end position="88"/>
    </location>
</feature>
<feature type="transmembrane region" description="Helical; Name=2" evidence="1">
    <location>
        <begin position="89"/>
        <end position="112"/>
    </location>
</feature>
<feature type="topological domain" description="Cytoplasmic" evidence="10">
    <location>
        <begin position="113"/>
        <end position="130"/>
    </location>
</feature>
<feature type="transmembrane region" description="Helical; Name=3" evidence="1">
    <location>
        <begin position="131"/>
        <end position="153"/>
    </location>
</feature>
<feature type="topological domain" description="Extracellular" evidence="10">
    <location>
        <begin position="154"/>
        <end position="163"/>
    </location>
</feature>
<feature type="transmembrane region" description="Helical; Name=4" evidence="1">
    <location>
        <begin position="164"/>
        <end position="188"/>
    </location>
</feature>
<feature type="topological domain" description="Cytoplasmic" evidence="10">
    <location>
        <begin position="189"/>
        <end position="196"/>
    </location>
</feature>
<feature type="transmembrane region" description="Helical; Name=5" evidence="1">
    <location>
        <begin position="197"/>
        <end position="223"/>
    </location>
</feature>
<feature type="topological domain" description="Extracellular" evidence="10">
    <location>
        <begin position="224"/>
        <end position="264"/>
    </location>
</feature>
<feature type="transmembrane region" description="Helical; Name=6" evidence="1">
    <location>
        <begin position="265"/>
        <end position="290"/>
    </location>
</feature>
<feature type="topological domain" description="Cytoplasmic" evidence="10">
    <location>
        <begin position="291"/>
        <end position="311"/>
    </location>
</feature>
<feature type="transmembrane region" description="Helical; Name=7" evidence="1">
    <location>
        <begin position="312"/>
        <end position="334"/>
    </location>
</feature>
<feature type="topological domain" description="Extracellular" evidence="10">
    <location>
        <begin position="335"/>
        <end position="344"/>
    </location>
</feature>
<feature type="transmembrane region" description="Helical; Name=8" evidence="1">
    <location>
        <begin position="345"/>
        <end position="370"/>
    </location>
</feature>
<feature type="topological domain" description="Cytoplasmic" evidence="10">
    <location>
        <begin position="371"/>
        <end position="388"/>
    </location>
</feature>
<feature type="transmembrane region" description="Helical; Name=9" evidence="1">
    <location>
        <begin position="389"/>
        <end position="413"/>
    </location>
</feature>
<feature type="topological domain" description="Extracellular" evidence="10">
    <location>
        <begin position="414"/>
        <end position="423"/>
    </location>
</feature>
<feature type="transmembrane region" description="Helical; Name=10" evidence="1">
    <location>
        <begin position="424"/>
        <end position="444"/>
    </location>
</feature>
<feature type="topological domain" description="Cytoplasmic" evidence="10">
    <location>
        <begin position="445"/>
        <end position="544"/>
    </location>
</feature>
<feature type="transmembrane region" description="Helical; Name=11" evidence="1">
    <location>
        <begin position="545"/>
        <end position="563"/>
    </location>
</feature>
<feature type="topological domain" description="Extracellular" evidence="10">
    <location>
        <begin position="564"/>
        <end position="581"/>
    </location>
</feature>
<feature type="transmembrane region" description="Helical; Name=12" evidence="1">
    <location>
        <begin position="582"/>
        <end position="605"/>
    </location>
</feature>
<feature type="topological domain" description="Cytoplasmic" evidence="10">
    <location>
        <begin position="606"/>
        <end position="612"/>
    </location>
</feature>
<feature type="region of interest" description="Disordered" evidence="4">
    <location>
        <begin position="1"/>
        <end position="50"/>
    </location>
</feature>
<feature type="region of interest" description="Disordered" evidence="4">
    <location>
        <begin position="499"/>
        <end position="525"/>
    </location>
</feature>
<feature type="compositionally biased region" description="Low complexity" evidence="4">
    <location>
        <begin position="1"/>
        <end position="46"/>
    </location>
</feature>
<feature type="compositionally biased region" description="Basic and acidic residues" evidence="4">
    <location>
        <begin position="506"/>
        <end position="518"/>
    </location>
</feature>
<feature type="sequence variant" id="VAR_037755" description="In dbSNP:rs28394859.">
    <original>I</original>
    <variation>V</variation>
    <location>
        <position position="241"/>
    </location>
</feature>
<feature type="sequence variant" id="VAR_037756" description="In dbSNP:rs2916414.">
    <original>D</original>
    <variation>E</variation>
    <location>
        <position position="309"/>
    </location>
</feature>
<feature type="sequence variant" id="VAR_037757" description="In dbSNP:rs11736799.">
    <original>V</original>
    <variation>M</variation>
    <location>
        <position position="434"/>
    </location>
</feature>
<feature type="sequence variant" id="VAR_037758" description="In dbSNP:rs34666677.">
    <original>K</original>
    <variation>T</variation>
    <location>
        <position position="493"/>
    </location>
</feature>
<feature type="sequence variant" id="VAR_037759" description="In dbSNP:rs35106142.">
    <original>Q</original>
    <variation>H</variation>
    <location>
        <position position="516"/>
    </location>
</feature>
<feature type="mutagenesis site" description="Complete loss of H(+) current at pH 5 and 4.5." evidence="6">
    <original>H</original>
    <variation>Q</variation>
    <variation>C</variation>
    <variation>E</variation>
    <location>
        <position position="229"/>
    </location>
</feature>
<feature type="mutagenesis site" description="Abolishes proton channel activity at pH 5 and 4.5." evidence="6">
    <original>H</original>
    <variation>R</variation>
    <variation>K</variation>
    <variation>D</variation>
    <location>
        <position position="229"/>
    </location>
</feature>
<feature type="mutagenesis site" description="Does not affect cell membrane localization. Reduction of proton channel activity." evidence="6">
    <original>D</original>
    <variation>E</variation>
    <location>
        <position position="570"/>
    </location>
</feature>
<feature type="mutagenesis site" description="Does not affect proton channel activity.">
    <original>D</original>
    <variation>H</variation>
    <location>
        <position position="570"/>
    </location>
</feature>
<feature type="mutagenesis site" description="Does not affect cell membrane localization. Strong reduction of proton channel activity." evidence="6">
    <original>D</original>
    <variation>N</variation>
    <location>
        <position position="570"/>
    </location>
</feature>
<feature type="sequence conflict" description="In Ref. 1; AAI30431/AAI30433." evidence="10" ref="1">
    <original>E</original>
    <variation>K</variation>
    <location>
        <position position="40"/>
    </location>
</feature>
<dbReference type="EMBL" id="BC130430">
    <property type="protein sequence ID" value="AAI30431.1"/>
    <property type="molecule type" value="mRNA"/>
</dbReference>
<dbReference type="EMBL" id="BC130432">
    <property type="protein sequence ID" value="AAI30433.1"/>
    <property type="molecule type" value="mRNA"/>
</dbReference>
<dbReference type="EMBL" id="BK000653">
    <property type="protein sequence ID" value="DAA00901.1"/>
    <property type="molecule type" value="mRNA"/>
</dbReference>
<dbReference type="EMBL" id="BK000654">
    <property type="protein sequence ID" value="DAA00902.1"/>
    <property type="molecule type" value="Genomic_DNA"/>
</dbReference>
<dbReference type="CCDS" id="CCDS3372.1"/>
<dbReference type="RefSeq" id="NP_819056.1">
    <property type="nucleotide sequence ID" value="NM_177998.3"/>
</dbReference>
<dbReference type="SMR" id="Q7RTM1"/>
<dbReference type="BioGRID" id="126348">
    <property type="interactions" value="20"/>
</dbReference>
<dbReference type="FunCoup" id="Q7RTM1">
    <property type="interactions" value="707"/>
</dbReference>
<dbReference type="IntAct" id="Q7RTM1">
    <property type="interactions" value="3"/>
</dbReference>
<dbReference type="STRING" id="9606.ENSP00000296358"/>
<dbReference type="TCDB" id="1.A.110.1.2">
    <property type="family name" value="the channel-forming otopetrin (otop) family"/>
</dbReference>
<dbReference type="iPTMnet" id="Q7RTM1"/>
<dbReference type="PhosphoSitePlus" id="Q7RTM1"/>
<dbReference type="BioMuta" id="OTOP1"/>
<dbReference type="DMDM" id="74713136"/>
<dbReference type="MassIVE" id="Q7RTM1"/>
<dbReference type="PaxDb" id="9606-ENSP00000296358"/>
<dbReference type="PeptideAtlas" id="Q7RTM1"/>
<dbReference type="ProteomicsDB" id="68872"/>
<dbReference type="Antibodypedia" id="22553">
    <property type="antibodies" value="85 antibodies from 20 providers"/>
</dbReference>
<dbReference type="DNASU" id="133060"/>
<dbReference type="Ensembl" id="ENST00000296358.5">
    <property type="protein sequence ID" value="ENSP00000296358.4"/>
    <property type="gene ID" value="ENSG00000163982.6"/>
</dbReference>
<dbReference type="GeneID" id="133060"/>
<dbReference type="KEGG" id="hsa:133060"/>
<dbReference type="MANE-Select" id="ENST00000296358.5">
    <property type="protein sequence ID" value="ENSP00000296358.4"/>
    <property type="RefSeq nucleotide sequence ID" value="NM_177998.3"/>
    <property type="RefSeq protein sequence ID" value="NP_819056.1"/>
</dbReference>
<dbReference type="UCSC" id="uc003ghp.2">
    <property type="organism name" value="human"/>
</dbReference>
<dbReference type="AGR" id="HGNC:19656"/>
<dbReference type="CTD" id="133060"/>
<dbReference type="DisGeNET" id="133060"/>
<dbReference type="GeneCards" id="OTOP1"/>
<dbReference type="HGNC" id="HGNC:19656">
    <property type="gene designation" value="OTOP1"/>
</dbReference>
<dbReference type="HPA" id="ENSG00000163982">
    <property type="expression patterns" value="Not detected"/>
</dbReference>
<dbReference type="MIM" id="607806">
    <property type="type" value="gene"/>
</dbReference>
<dbReference type="neXtProt" id="NX_Q7RTM1"/>
<dbReference type="OpenTargets" id="ENSG00000163982"/>
<dbReference type="PharmGKB" id="PA134883507"/>
<dbReference type="VEuPathDB" id="HostDB:ENSG00000163982"/>
<dbReference type="eggNOG" id="KOG4740">
    <property type="taxonomic scope" value="Eukaryota"/>
</dbReference>
<dbReference type="GeneTree" id="ENSGT00940000159350"/>
<dbReference type="HOGENOM" id="CLU_032913_1_0_1"/>
<dbReference type="InParanoid" id="Q7RTM1"/>
<dbReference type="OMA" id="HATTCWI"/>
<dbReference type="OrthoDB" id="6429739at2759"/>
<dbReference type="PAN-GO" id="Q7RTM1">
    <property type="GO annotations" value="4 GO annotations based on evolutionary models"/>
</dbReference>
<dbReference type="PhylomeDB" id="Q7RTM1"/>
<dbReference type="TreeFam" id="TF313428"/>
<dbReference type="PathwayCommons" id="Q7RTM1"/>
<dbReference type="Reactome" id="R-HSA-9729555">
    <property type="pathway name" value="Sensory perception of sour taste"/>
</dbReference>
<dbReference type="BioGRID-ORCS" id="133060">
    <property type="hits" value="541 hits in 1142 CRISPR screens"/>
</dbReference>
<dbReference type="GenomeRNAi" id="133060"/>
<dbReference type="Pharos" id="Q7RTM1">
    <property type="development level" value="Tbio"/>
</dbReference>
<dbReference type="PRO" id="PR:Q7RTM1"/>
<dbReference type="Proteomes" id="UP000005640">
    <property type="component" value="Chromosome 4"/>
</dbReference>
<dbReference type="RNAct" id="Q7RTM1">
    <property type="molecule type" value="protein"/>
</dbReference>
<dbReference type="Bgee" id="ENSG00000163982">
    <property type="expression patterns" value="Expressed in male germ line stem cell (sensu Vertebrata) in testis and 7 other cell types or tissues"/>
</dbReference>
<dbReference type="GO" id="GO:0016020">
    <property type="term" value="C:membrane"/>
    <property type="evidence" value="ECO:0000318"/>
    <property type="project" value="GO_Central"/>
</dbReference>
<dbReference type="GO" id="GO:0005902">
    <property type="term" value="C:microvillus"/>
    <property type="evidence" value="ECO:0007669"/>
    <property type="project" value="UniProtKB-SubCell"/>
</dbReference>
<dbReference type="GO" id="GO:0005886">
    <property type="term" value="C:plasma membrane"/>
    <property type="evidence" value="ECO:0000314"/>
    <property type="project" value="UniProtKB"/>
</dbReference>
<dbReference type="GO" id="GO:0042802">
    <property type="term" value="F:identical protein binding"/>
    <property type="evidence" value="ECO:0000250"/>
    <property type="project" value="UniProtKB"/>
</dbReference>
<dbReference type="GO" id="GO:0015252">
    <property type="term" value="F:proton channel activity"/>
    <property type="evidence" value="ECO:0000314"/>
    <property type="project" value="UniProtKB"/>
</dbReference>
<dbReference type="GO" id="GO:0031214">
    <property type="term" value="P:biomineral tissue development"/>
    <property type="evidence" value="ECO:0007669"/>
    <property type="project" value="UniProtKB-KW"/>
</dbReference>
<dbReference type="GO" id="GO:0032869">
    <property type="term" value="P:cellular response to insulin stimulus"/>
    <property type="evidence" value="ECO:0000250"/>
    <property type="project" value="UniProtKB"/>
</dbReference>
<dbReference type="GO" id="GO:0009590">
    <property type="term" value="P:detection of gravity"/>
    <property type="evidence" value="ECO:0007669"/>
    <property type="project" value="Ensembl"/>
</dbReference>
<dbReference type="GO" id="GO:0042472">
    <property type="term" value="P:inner ear morphogenesis"/>
    <property type="evidence" value="ECO:0000318"/>
    <property type="project" value="GO_Central"/>
</dbReference>
<dbReference type="GO" id="GO:0060336">
    <property type="term" value="P:negative regulation of type II interferon-mediated signaling pathway"/>
    <property type="evidence" value="ECO:0000250"/>
    <property type="project" value="UniProtKB"/>
</dbReference>
<dbReference type="GO" id="GO:1902600">
    <property type="term" value="P:proton transmembrane transport"/>
    <property type="evidence" value="ECO:0000314"/>
    <property type="project" value="UniProtKB"/>
</dbReference>
<dbReference type="InterPro" id="IPR004878">
    <property type="entry name" value="Otopetrin"/>
</dbReference>
<dbReference type="PANTHER" id="PTHR21522">
    <property type="entry name" value="PROTON CHANNEL OTOP"/>
    <property type="match status" value="1"/>
</dbReference>
<dbReference type="PANTHER" id="PTHR21522:SF19">
    <property type="entry name" value="PROTON CHANNEL OTOP1"/>
    <property type="match status" value="1"/>
</dbReference>
<dbReference type="Pfam" id="PF03189">
    <property type="entry name" value="Otopetrin"/>
    <property type="match status" value="3"/>
</dbReference>
<proteinExistence type="evidence at protein level"/>
<keyword id="KW-0091">Biomineralization</keyword>
<keyword id="KW-1003">Cell membrane</keyword>
<keyword id="KW-0966">Cell projection</keyword>
<keyword id="KW-0375">Hydrogen ion transport</keyword>
<keyword id="KW-0407">Ion channel</keyword>
<keyword id="KW-0406">Ion transport</keyword>
<keyword id="KW-0472">Membrane</keyword>
<keyword id="KW-1185">Reference proteome</keyword>
<keyword id="KW-0812">Transmembrane</keyword>
<keyword id="KW-1133">Transmembrane helix</keyword>
<keyword id="KW-0813">Transport</keyword>
<accession>Q7RTM1</accession>
<accession>A1L476</accession>
<reference key="1">
    <citation type="journal article" date="2004" name="Genome Res.">
        <title>The status, quality, and expansion of the NIH full-length cDNA project: the Mammalian Gene Collection (MGC).</title>
        <authorList>
            <consortium name="The MGC Project Team"/>
        </authorList>
    </citation>
    <scope>NUCLEOTIDE SEQUENCE [LARGE SCALE MRNA]</scope>
</reference>
<reference key="2">
    <citation type="journal article" date="2003" name="Hum. Mol. Genet.">
        <title>Non-syndromic vestibular disorder with otoconial agenesis in tilted/mergulhador mice caused by mutations in otopetrin 1.</title>
        <authorList>
            <person name="Hurle B."/>
            <person name="Ignatova E."/>
            <person name="Massironi S.M."/>
            <person name="Mashimo T."/>
            <person name="Rios X."/>
            <person name="Thalmann I."/>
            <person name="Thalmann R."/>
            <person name="Ornitz D.M."/>
        </authorList>
    </citation>
    <scope>IDENTIFICATION</scope>
</reference>
<reference key="3">
    <citation type="journal article" date="2018" name="Science">
        <title>An evolutionarily conserved gene family encodes proton-selective ion channels.</title>
        <authorList>
            <person name="Tu Y.H."/>
            <person name="Cooper A.J."/>
            <person name="Teng B."/>
            <person name="Chang R.B."/>
            <person name="Artiga D.J."/>
            <person name="Turner H.N."/>
            <person name="Mulhall E.M."/>
            <person name="Ye W."/>
            <person name="Smith A.D."/>
            <person name="Liman E.R."/>
        </authorList>
    </citation>
    <scope>FUNCTION</scope>
    <scope>TRANSPORTER ACTIVITY</scope>
</reference>
<reference key="4">
    <citation type="journal article" date="2022" name="Commun. Biol.">
        <title>The roles of two extracellular loops in proton sensing and permeation in human Otop1 proton channel.</title>
        <authorList>
            <person name="Li B."/>
            <person name="Wang Y."/>
            <person name="Castro A."/>
            <person name="Ng C."/>
            <person name="Wang Z."/>
            <person name="Chaudhry H."/>
            <person name="Agbaje Z."/>
            <person name="Ulloa G.A."/>
            <person name="Yu Y."/>
        </authorList>
    </citation>
    <scope>FUNCTION</scope>
    <scope>TRANSPORTER ACTIVITY</scope>
    <scope>ACTIVITY REGULATION</scope>
    <scope>MUTAGENESIS OF HIS-229 AND ASP-570</scope>
    <scope>SUBCELLULAR LOCATION</scope>
</reference>
<reference key="5">
    <citation type="journal article" date="2023" name="Nat. Commun.">
        <title>The proton channel OTOP1 is a sensor for the taste of ammonium chloride.</title>
        <authorList>
            <person name="Liang Z."/>
            <person name="Wilson C.E."/>
            <person name="Teng B."/>
            <person name="Kinnamon S.C."/>
            <person name="Liman E.R."/>
        </authorList>
    </citation>
    <scope>FUNCTION</scope>
    <scope>TRANSPORTER ACTIVITY</scope>
    <scope>ACTIVITY REGULATION</scope>
</reference>
<gene>
    <name evidence="8 11" type="primary">OTOP1</name>
</gene>
<name>OTOP1_HUMAN</name>
<sequence length="612" mass="67353">MLEGLGSPASPRAAASASVAGSSGPAACSPPSSSAPRSPESPAPRRGGVRASVPQKLAEMLSSQYGLIVFVAGLLLLLAWAVHAAGVSKSDLLCFLTALMLLQLLWMLWYVGRSSAHRRLFRLKDTHAGAGWLRGSITLFAVITVILGCLKIGYFIGFSECLSATEGVFPVTHSVHTLLQVYFLWGHAKDIIQSFKTLERFGVIHSVFTNLLLWANGVLNESKHQLNEHKERLITLGFGNITTVLDDHTPQCNCTPPTLCTAISHGIYYLYPFNIEYQILASTMLYVLWKNIGRKVDSHQHQKMQFKSDGVMVGAVLGLTVLAATIAVVVVYLIHIGRSKTKSESALIMFYLYAITLLMLMGAAGLAGIRIYRIDEKSLDESKNPARKLDSDLLVGTASGSWLISWGSILAILCAEGHPRYTWYNLPYSILAIVEKYIQNLFIFESIHREPEKLSEDIQTLRVVTVCNGNTMPLASSCPKSGGVARDVAPQGKDMPPAANGNVCMRESHDKEEEKQEESSWGGSPSPVRLPRFLQGNAKRKVLRNIAAFLFLCNISLWIPPAFGCRPEYDNGLEEIVFGFEPWIIVVNLAMPFSIFYRMHAAASLFEVYCKI</sequence>
<organism>
    <name type="scientific">Homo sapiens</name>
    <name type="common">Human</name>
    <dbReference type="NCBI Taxonomy" id="9606"/>
    <lineage>
        <taxon>Eukaryota</taxon>
        <taxon>Metazoa</taxon>
        <taxon>Chordata</taxon>
        <taxon>Craniata</taxon>
        <taxon>Vertebrata</taxon>
        <taxon>Euteleostomi</taxon>
        <taxon>Mammalia</taxon>
        <taxon>Eutheria</taxon>
        <taxon>Euarchontoglires</taxon>
        <taxon>Primates</taxon>
        <taxon>Haplorrhini</taxon>
        <taxon>Catarrhini</taxon>
        <taxon>Hominidae</taxon>
        <taxon>Homo</taxon>
    </lineage>
</organism>
<protein>
    <recommendedName>
        <fullName evidence="10">Proton channel OTOP1</fullName>
    </recommendedName>
    <alternativeName>
        <fullName evidence="8">Otopetrin-1</fullName>
        <shortName evidence="9">hOtop1</shortName>
    </alternativeName>
</protein>
<evidence type="ECO:0000250" key="1">
    <source>
        <dbReference type="UniProtKB" id="Q7ZWK8"/>
    </source>
</evidence>
<evidence type="ECO:0000250" key="2">
    <source>
        <dbReference type="UniProtKB" id="Q80VM9"/>
    </source>
</evidence>
<evidence type="ECO:0000255" key="3"/>
<evidence type="ECO:0000256" key="4">
    <source>
        <dbReference type="SAM" id="MobiDB-lite"/>
    </source>
</evidence>
<evidence type="ECO:0000269" key="5">
    <source>
    </source>
</evidence>
<evidence type="ECO:0000269" key="6">
    <source>
    </source>
</evidence>
<evidence type="ECO:0000269" key="7">
    <source>
    </source>
</evidence>
<evidence type="ECO:0000303" key="8">
    <source>
    </source>
</evidence>
<evidence type="ECO:0000303" key="9">
    <source>
    </source>
</evidence>
<evidence type="ECO:0000305" key="10"/>
<evidence type="ECO:0000312" key="11">
    <source>
        <dbReference type="HGNC" id="HGNC:19656"/>
    </source>
</evidence>